<geneLocation type="chloroplast"/>
<feature type="chain" id="PRO_0000362586" description="ATP synthase subunit a, chloroplastic">
    <location>
        <begin position="1"/>
        <end position="247"/>
    </location>
</feature>
<feature type="transmembrane region" description="Helical" evidence="1">
    <location>
        <begin position="38"/>
        <end position="58"/>
    </location>
</feature>
<feature type="transmembrane region" description="Helical" evidence="1">
    <location>
        <begin position="95"/>
        <end position="115"/>
    </location>
</feature>
<feature type="transmembrane region" description="Helical" evidence="1">
    <location>
        <begin position="134"/>
        <end position="154"/>
    </location>
</feature>
<feature type="transmembrane region" description="Helical" evidence="1">
    <location>
        <begin position="199"/>
        <end position="219"/>
    </location>
</feature>
<feature type="transmembrane region" description="Helical" evidence="1">
    <location>
        <begin position="220"/>
        <end position="240"/>
    </location>
</feature>
<proteinExistence type="inferred from homology"/>
<accession>Q68S18</accession>
<comment type="function">
    <text evidence="1">Key component of the proton channel; it plays a direct role in the translocation of protons across the membrane.</text>
</comment>
<comment type="subunit">
    <text evidence="1">F-type ATPases have 2 components, CF(1) - the catalytic core - and CF(0) - the membrane proton channel. CF(1) has five subunits: alpha(3), beta(3), gamma(1), delta(1), epsilon(1). CF(0) has four main subunits: a, b, b' and c.</text>
</comment>
<comment type="subcellular location">
    <subcellularLocation>
        <location evidence="1">Plastid</location>
        <location evidence="1">Chloroplast thylakoid membrane</location>
        <topology evidence="1">Multi-pass membrane protein</topology>
    </subcellularLocation>
</comment>
<comment type="similarity">
    <text evidence="1">Belongs to the ATPase A chain family.</text>
</comment>
<name>ATPI_PANGI</name>
<sequence length="247" mass="27012">MNVLSCSINTLKGLYDISGVEVGQHFYWKIGGFQVHGQVLITSWVVIAILLGSATIAVRNPQTIPTGGQNFFEYVLEFIRDVSKTQIGEEYGPWVPFIGTMFLFIFVSNWSGALLPWKIIQLPHGELAAPTNDINTTVALALLTSVAYFYAGLTKKGLGYFGKYIQPTPILLPINILEDFTKPLSLSFRLFGDILADELVVVVLVSLVPSVVPIPVMFLGLFTSGIQALIFATLAAAYIGESMEGHH</sequence>
<reference key="1">
    <citation type="journal article" date="2004" name="DNA Res.">
        <title>Complete chloroplast genome sequence from Korea ginseng (Panax schinseng Nees) and comparative analysis of sequence evolution among 17 vascular plants.</title>
        <authorList>
            <person name="Kim K.-J."/>
            <person name="Lee H.-L."/>
        </authorList>
    </citation>
    <scope>NUCLEOTIDE SEQUENCE [LARGE SCALE GENOMIC DNA]</scope>
</reference>
<evidence type="ECO:0000255" key="1">
    <source>
        <dbReference type="HAMAP-Rule" id="MF_01393"/>
    </source>
</evidence>
<organism>
    <name type="scientific">Panax ginseng</name>
    <name type="common">Korean ginseng</name>
    <dbReference type="NCBI Taxonomy" id="4054"/>
    <lineage>
        <taxon>Eukaryota</taxon>
        <taxon>Viridiplantae</taxon>
        <taxon>Streptophyta</taxon>
        <taxon>Embryophyta</taxon>
        <taxon>Tracheophyta</taxon>
        <taxon>Spermatophyta</taxon>
        <taxon>Magnoliopsida</taxon>
        <taxon>eudicotyledons</taxon>
        <taxon>Gunneridae</taxon>
        <taxon>Pentapetalae</taxon>
        <taxon>asterids</taxon>
        <taxon>campanulids</taxon>
        <taxon>Apiales</taxon>
        <taxon>Araliaceae</taxon>
        <taxon>Panax</taxon>
    </lineage>
</organism>
<gene>
    <name evidence="1" type="primary">atpI</name>
    <name type="ORF">PSC0159</name>
</gene>
<protein>
    <recommendedName>
        <fullName evidence="1">ATP synthase subunit a, chloroplastic</fullName>
    </recommendedName>
    <alternativeName>
        <fullName evidence="1">ATP synthase F0 sector subunit a</fullName>
    </alternativeName>
    <alternativeName>
        <fullName evidence="1">F-ATPase subunit IV</fullName>
    </alternativeName>
</protein>
<dbReference type="EMBL" id="AY582139">
    <property type="protein sequence ID" value="AAT98497.1"/>
    <property type="molecule type" value="Genomic_DNA"/>
</dbReference>
<dbReference type="RefSeq" id="YP_086954.1">
    <property type="nucleotide sequence ID" value="NC_006290.1"/>
</dbReference>
<dbReference type="SMR" id="Q68S18"/>
<dbReference type="GeneID" id="3021585"/>
<dbReference type="GO" id="GO:0009535">
    <property type="term" value="C:chloroplast thylakoid membrane"/>
    <property type="evidence" value="ECO:0007669"/>
    <property type="project" value="UniProtKB-SubCell"/>
</dbReference>
<dbReference type="GO" id="GO:0005886">
    <property type="term" value="C:plasma membrane"/>
    <property type="evidence" value="ECO:0007669"/>
    <property type="project" value="UniProtKB-UniRule"/>
</dbReference>
<dbReference type="GO" id="GO:0045259">
    <property type="term" value="C:proton-transporting ATP synthase complex"/>
    <property type="evidence" value="ECO:0007669"/>
    <property type="project" value="UniProtKB-KW"/>
</dbReference>
<dbReference type="GO" id="GO:0046933">
    <property type="term" value="F:proton-transporting ATP synthase activity, rotational mechanism"/>
    <property type="evidence" value="ECO:0007669"/>
    <property type="project" value="UniProtKB-UniRule"/>
</dbReference>
<dbReference type="CDD" id="cd00310">
    <property type="entry name" value="ATP-synt_Fo_a_6"/>
    <property type="match status" value="1"/>
</dbReference>
<dbReference type="FunFam" id="1.20.120.220:FF:000001">
    <property type="entry name" value="ATP synthase subunit a, chloroplastic"/>
    <property type="match status" value="1"/>
</dbReference>
<dbReference type="Gene3D" id="1.20.120.220">
    <property type="entry name" value="ATP synthase, F0 complex, subunit A"/>
    <property type="match status" value="1"/>
</dbReference>
<dbReference type="HAMAP" id="MF_01393">
    <property type="entry name" value="ATP_synth_a_bact"/>
    <property type="match status" value="1"/>
</dbReference>
<dbReference type="InterPro" id="IPR045082">
    <property type="entry name" value="ATP_syn_F0_a_bact/chloroplast"/>
</dbReference>
<dbReference type="InterPro" id="IPR000568">
    <property type="entry name" value="ATP_synth_F0_asu"/>
</dbReference>
<dbReference type="InterPro" id="IPR035908">
    <property type="entry name" value="F0_ATP_A_sf"/>
</dbReference>
<dbReference type="NCBIfam" id="TIGR01131">
    <property type="entry name" value="ATP_synt_6_or_A"/>
    <property type="match status" value="1"/>
</dbReference>
<dbReference type="PANTHER" id="PTHR42823">
    <property type="entry name" value="ATP SYNTHASE SUBUNIT A, CHLOROPLASTIC"/>
    <property type="match status" value="1"/>
</dbReference>
<dbReference type="PANTHER" id="PTHR42823:SF3">
    <property type="entry name" value="ATP SYNTHASE SUBUNIT A, CHLOROPLASTIC"/>
    <property type="match status" value="1"/>
</dbReference>
<dbReference type="Pfam" id="PF00119">
    <property type="entry name" value="ATP-synt_A"/>
    <property type="match status" value="1"/>
</dbReference>
<dbReference type="PRINTS" id="PR00123">
    <property type="entry name" value="ATPASEA"/>
</dbReference>
<dbReference type="SUPFAM" id="SSF81336">
    <property type="entry name" value="F1F0 ATP synthase subunit A"/>
    <property type="match status" value="1"/>
</dbReference>
<keyword id="KW-0066">ATP synthesis</keyword>
<keyword id="KW-0138">CF(0)</keyword>
<keyword id="KW-0150">Chloroplast</keyword>
<keyword id="KW-0375">Hydrogen ion transport</keyword>
<keyword id="KW-0406">Ion transport</keyword>
<keyword id="KW-0472">Membrane</keyword>
<keyword id="KW-0934">Plastid</keyword>
<keyword id="KW-0793">Thylakoid</keyword>
<keyword id="KW-0812">Transmembrane</keyword>
<keyword id="KW-1133">Transmembrane helix</keyword>
<keyword id="KW-0813">Transport</keyword>